<comment type="function">
    <text evidence="1">Required for maturation of urease via the functional incorporation of the urease nickel metallocenter.</text>
</comment>
<comment type="subunit">
    <text evidence="1">UreD, UreF and UreG form a complex that acts as a GTP-hydrolysis-dependent molecular chaperone, activating the urease apoprotein by helping to assemble the nickel containing metallocenter of UreC. The UreE protein probably delivers the nickel.</text>
</comment>
<comment type="subcellular location">
    <subcellularLocation>
        <location evidence="1">Cytoplasm</location>
    </subcellularLocation>
</comment>
<comment type="similarity">
    <text evidence="1">Belongs to the UreF family.</text>
</comment>
<proteinExistence type="inferred from homology"/>
<protein>
    <recommendedName>
        <fullName evidence="1">Urease accessory protein UreF</fullName>
    </recommendedName>
</protein>
<accession>Q02FC6</accession>
<gene>
    <name evidence="1" type="primary">ureF</name>
    <name type="ordered locus">PA14_64660</name>
</gene>
<sequence length="223" mass="24636">MNSIWARLRLASSQLPIGGYSYSQGLEAALDNGWVRDAESARTWLVDQLQLNLARFEAPLLAGLLRAALIGDWAACDAASERHRASRETRELAQESRQMGFSLHQLLEALPELDAPGRAWLARQDPPNLAAAWAMAARAWRLDAEEALSAWFWSWLENQLAVLMKTLPLGQLAAQKLASSLLPELDRACAEALRRPAVEGSAAFGLALASMTHETQYSRLFRS</sequence>
<reference key="1">
    <citation type="journal article" date="2006" name="Genome Biol.">
        <title>Genomic analysis reveals that Pseudomonas aeruginosa virulence is combinatorial.</title>
        <authorList>
            <person name="Lee D.G."/>
            <person name="Urbach J.M."/>
            <person name="Wu G."/>
            <person name="Liberati N.T."/>
            <person name="Feinbaum R.L."/>
            <person name="Miyata S."/>
            <person name="Diggins L.T."/>
            <person name="He J."/>
            <person name="Saucier M."/>
            <person name="Deziel E."/>
            <person name="Friedman L."/>
            <person name="Li L."/>
            <person name="Grills G."/>
            <person name="Montgomery K."/>
            <person name="Kucherlapati R."/>
            <person name="Rahme L.G."/>
            <person name="Ausubel F.M."/>
        </authorList>
    </citation>
    <scope>NUCLEOTIDE SEQUENCE [LARGE SCALE GENOMIC DNA]</scope>
    <source>
        <strain>UCBPP-PA14</strain>
    </source>
</reference>
<feature type="chain" id="PRO_0000344148" description="Urease accessory protein UreF">
    <location>
        <begin position="1"/>
        <end position="223"/>
    </location>
</feature>
<organism>
    <name type="scientific">Pseudomonas aeruginosa (strain UCBPP-PA14)</name>
    <dbReference type="NCBI Taxonomy" id="208963"/>
    <lineage>
        <taxon>Bacteria</taxon>
        <taxon>Pseudomonadati</taxon>
        <taxon>Pseudomonadota</taxon>
        <taxon>Gammaproteobacteria</taxon>
        <taxon>Pseudomonadales</taxon>
        <taxon>Pseudomonadaceae</taxon>
        <taxon>Pseudomonas</taxon>
    </lineage>
</organism>
<evidence type="ECO:0000255" key="1">
    <source>
        <dbReference type="HAMAP-Rule" id="MF_01385"/>
    </source>
</evidence>
<name>UREF_PSEAB</name>
<dbReference type="EMBL" id="CP000438">
    <property type="protein sequence ID" value="ABJ14277.1"/>
    <property type="molecule type" value="Genomic_DNA"/>
</dbReference>
<dbReference type="RefSeq" id="WP_003095528.1">
    <property type="nucleotide sequence ID" value="NZ_CP034244.1"/>
</dbReference>
<dbReference type="SMR" id="Q02FC6"/>
<dbReference type="KEGG" id="pau:PA14_64660"/>
<dbReference type="PseudoCAP" id="PA14_64660"/>
<dbReference type="HOGENOM" id="CLU_049215_2_1_6"/>
<dbReference type="BioCyc" id="PAER208963:G1G74-5464-MONOMER"/>
<dbReference type="Proteomes" id="UP000000653">
    <property type="component" value="Chromosome"/>
</dbReference>
<dbReference type="GO" id="GO:0005737">
    <property type="term" value="C:cytoplasm"/>
    <property type="evidence" value="ECO:0007669"/>
    <property type="project" value="UniProtKB-SubCell"/>
</dbReference>
<dbReference type="GO" id="GO:0016151">
    <property type="term" value="F:nickel cation binding"/>
    <property type="evidence" value="ECO:0007669"/>
    <property type="project" value="UniProtKB-UniRule"/>
</dbReference>
<dbReference type="Gene3D" id="1.10.4190.10">
    <property type="entry name" value="Urease accessory protein UreF"/>
    <property type="match status" value="1"/>
</dbReference>
<dbReference type="HAMAP" id="MF_01385">
    <property type="entry name" value="UreF"/>
    <property type="match status" value="1"/>
</dbReference>
<dbReference type="InterPro" id="IPR002639">
    <property type="entry name" value="UreF"/>
</dbReference>
<dbReference type="InterPro" id="IPR038277">
    <property type="entry name" value="UreF_sf"/>
</dbReference>
<dbReference type="PANTHER" id="PTHR33620">
    <property type="entry name" value="UREASE ACCESSORY PROTEIN F"/>
    <property type="match status" value="1"/>
</dbReference>
<dbReference type="PANTHER" id="PTHR33620:SF1">
    <property type="entry name" value="UREASE ACCESSORY PROTEIN F"/>
    <property type="match status" value="1"/>
</dbReference>
<dbReference type="Pfam" id="PF01730">
    <property type="entry name" value="UreF"/>
    <property type="match status" value="1"/>
</dbReference>
<dbReference type="PIRSF" id="PIRSF009467">
    <property type="entry name" value="Ureas_acces_UreF"/>
    <property type="match status" value="1"/>
</dbReference>
<keyword id="KW-0143">Chaperone</keyword>
<keyword id="KW-0963">Cytoplasm</keyword>
<keyword id="KW-0996">Nickel insertion</keyword>